<protein>
    <recommendedName>
        <fullName evidence="2 3">Putative type I restriction enzyme MpnIIP endonuclease subunit C-terminal part</fullName>
        <shortName>R protein C-terminal part</shortName>
    </recommendedName>
    <alternativeName>
        <fullName>Putative type-1 restriction enzyme MpnORFDP R protein part 3</fullName>
        <shortName>MpnORFDBP</shortName>
    </alternativeName>
</protein>
<accession>P75433</accession>
<gene>
    <name type="ordered locus">MPN_345</name>
    <name type="ORF">H91_orf206</name>
    <name type="ORF">MP491</name>
</gene>
<name>T1R3_MYCPN</name>
<sequence length="206" mass="23957">MRWSDSENNKIDYIEDFATHFLNKNALLNVICKFCVFRSNSDLWVMRPYQICATERILEKIKEDNRNSKNSKNASKGGCIWHSTGSGKTLTSFKAVQLASEIDFVDKVLFVVDRKDLDNQTIEEYEKFQAGSVSETENTNDLKEKILDDSTATRAIVTTIHKLKRLIDQRSKLKDEDLKKKNIVLIFDECHRSQFGKMKQEIDEFF</sequence>
<comment type="function">
    <text evidence="2 5">The C-terminal section of a putative type I restriction enzyme that if reconstituted might recognize 5'-GAN(7)TAY-3' and cleave a random distance away (Probable). Subunit R is required for both nuclease and ATPase activities, but not for modification (PubMed:12654995).</text>
</comment>
<comment type="disruption phenotype">
    <text evidence="1">Non-essential, it can be deleted.</text>
</comment>
<comment type="caution">
    <text evidence="4 5">Could be the product of a pseudogene; in this organism the endonuclease subunit carries 2 frameshift mutations (resulting in 3 short ORFs) and is probably not expressed.</text>
</comment>
<keyword id="KW-1185">Reference proteome</keyword>
<keyword id="KW-0680">Restriction system</keyword>
<feature type="chain" id="PRO_0000077264" description="Putative type I restriction enzyme MpnIIP endonuclease subunit C-terminal part">
    <location>
        <begin position="1"/>
        <end position="206"/>
    </location>
</feature>
<organism>
    <name type="scientific">Mycoplasma pneumoniae (strain ATCC 29342 / M129 / Subtype 1)</name>
    <name type="common">Mycoplasmoides pneumoniae</name>
    <dbReference type="NCBI Taxonomy" id="272634"/>
    <lineage>
        <taxon>Bacteria</taxon>
        <taxon>Bacillati</taxon>
        <taxon>Mycoplasmatota</taxon>
        <taxon>Mycoplasmoidales</taxon>
        <taxon>Mycoplasmoidaceae</taxon>
        <taxon>Mycoplasmoides</taxon>
    </lineage>
</organism>
<dbReference type="EMBL" id="U00089">
    <property type="protein sequence ID" value="AAB96139.1"/>
    <property type="molecule type" value="Genomic_DNA"/>
</dbReference>
<dbReference type="PIR" id="S73817">
    <property type="entry name" value="S73817"/>
</dbReference>
<dbReference type="SMR" id="P75433"/>
<dbReference type="STRING" id="272634.MPN_345"/>
<dbReference type="REBASE" id="6705">
    <property type="entry name" value="MpnIIP"/>
</dbReference>
<dbReference type="EnsemblBacteria" id="AAB96139">
    <property type="protein sequence ID" value="AAB96139"/>
    <property type="gene ID" value="MPN_345"/>
</dbReference>
<dbReference type="KEGG" id="mpn:MPN_345"/>
<dbReference type="HOGENOM" id="CLU_004848_5_0_14"/>
<dbReference type="PRO" id="PR:P75433"/>
<dbReference type="Proteomes" id="UP000000808">
    <property type="component" value="Chromosome"/>
</dbReference>
<dbReference type="GO" id="GO:0009035">
    <property type="term" value="F:type I site-specific deoxyribonuclease activity"/>
    <property type="evidence" value="ECO:0007669"/>
    <property type="project" value="UniProtKB-EC"/>
</dbReference>
<dbReference type="GO" id="GO:0009307">
    <property type="term" value="P:DNA restriction-modification system"/>
    <property type="evidence" value="ECO:0007669"/>
    <property type="project" value="UniProtKB-KW"/>
</dbReference>
<dbReference type="Gene3D" id="3.90.1570.50">
    <property type="match status" value="1"/>
</dbReference>
<dbReference type="Gene3D" id="3.40.50.300">
    <property type="entry name" value="P-loop containing nucleotide triphosphate hydrolases"/>
    <property type="match status" value="1"/>
</dbReference>
<dbReference type="InterPro" id="IPR014001">
    <property type="entry name" value="Helicase_ATP-bd"/>
</dbReference>
<dbReference type="InterPro" id="IPR027417">
    <property type="entry name" value="P-loop_NTPase"/>
</dbReference>
<dbReference type="InterPro" id="IPR040980">
    <property type="entry name" value="SWI2_SNF2"/>
</dbReference>
<dbReference type="InterPro" id="IPR051268">
    <property type="entry name" value="Type-I_R_enzyme_R_subunit"/>
</dbReference>
<dbReference type="PANTHER" id="PTHR30195:SF16">
    <property type="entry name" value="TYPE I RESTRICTION ENZYME ENDONUCLEASE SUBUNIT"/>
    <property type="match status" value="1"/>
</dbReference>
<dbReference type="PANTHER" id="PTHR30195">
    <property type="entry name" value="TYPE I SITE-SPECIFIC DEOXYRIBONUCLEASE PROTEIN SUBUNIT M AND R"/>
    <property type="match status" value="1"/>
</dbReference>
<dbReference type="Pfam" id="PF18766">
    <property type="entry name" value="SWI2_SNF2"/>
    <property type="match status" value="1"/>
</dbReference>
<dbReference type="SMART" id="SM00487">
    <property type="entry name" value="DEXDc"/>
    <property type="match status" value="1"/>
</dbReference>
<dbReference type="SUPFAM" id="SSF52540">
    <property type="entry name" value="P-loop containing nucleoside triphosphate hydrolases"/>
    <property type="match status" value="1"/>
</dbReference>
<evidence type="ECO:0000269" key="1">
    <source>
    </source>
</evidence>
<evidence type="ECO:0000303" key="2">
    <source>
    </source>
</evidence>
<evidence type="ECO:0000303" key="3">
    <source>
    </source>
</evidence>
<evidence type="ECO:0000305" key="4">
    <source>
    </source>
</evidence>
<evidence type="ECO:0000305" key="5">
    <source>
    </source>
</evidence>
<reference key="1">
    <citation type="journal article" date="1996" name="Nucleic Acids Res.">
        <title>Complete sequence analysis of the genome of the bacterium Mycoplasma pneumoniae.</title>
        <authorList>
            <person name="Himmelreich R."/>
            <person name="Hilbert H."/>
            <person name="Plagens H."/>
            <person name="Pirkl E."/>
            <person name="Li B.-C."/>
            <person name="Herrmann R."/>
        </authorList>
    </citation>
    <scope>NUCLEOTIDE SEQUENCE [LARGE SCALE GENOMIC DNA]</scope>
    <source>
        <strain>ATCC 29342 / M129 / Subtype 1</strain>
    </source>
</reference>
<reference key="2">
    <citation type="journal article" date="2003" name="Nucleic Acids Res.">
        <title>A nomenclature for restriction enzymes, DNA methyltransferases, homing endonucleases and their genes.</title>
        <authorList>
            <person name="Roberts R.J."/>
            <person name="Belfort M."/>
            <person name="Bestor T."/>
            <person name="Bhagwat A.S."/>
            <person name="Bickle T.A."/>
            <person name="Bitinaite J."/>
            <person name="Blumenthal R.M."/>
            <person name="Degtyarev S.K."/>
            <person name="Dryden D.T."/>
            <person name="Dybvig K."/>
            <person name="Firman K."/>
            <person name="Gromova E.S."/>
            <person name="Gumport R.I."/>
            <person name="Halford S.E."/>
            <person name="Hattman S."/>
            <person name="Heitman J."/>
            <person name="Hornby D.P."/>
            <person name="Janulaitis A."/>
            <person name="Jeltsch A."/>
            <person name="Josephsen J."/>
            <person name="Kiss A."/>
            <person name="Klaenhammer T.R."/>
            <person name="Kobayashi I."/>
            <person name="Kong H."/>
            <person name="Krueger D.H."/>
            <person name="Lacks S."/>
            <person name="Marinus M.G."/>
            <person name="Miyahara M."/>
            <person name="Morgan R.D."/>
            <person name="Murray N.E."/>
            <person name="Nagaraja V."/>
            <person name="Piekarowicz A."/>
            <person name="Pingoud A."/>
            <person name="Raleigh E."/>
            <person name="Rao D.N."/>
            <person name="Reich N."/>
            <person name="Repin V.E."/>
            <person name="Selker E.U."/>
            <person name="Shaw P.C."/>
            <person name="Stein D.C."/>
            <person name="Stoddard B.L."/>
            <person name="Szybalski W."/>
            <person name="Trautner T.A."/>
            <person name="Van Etten J.L."/>
            <person name="Vitor J.M."/>
            <person name="Wilson G.G."/>
            <person name="Xu S.Y."/>
        </authorList>
    </citation>
    <scope>NOMENCLATURE</scope>
</reference>
<reference key="3">
    <citation type="journal article" date="2010" name="Appl. Environ. Microbiol.">
        <title>Targeted chromosomal knockouts in Mycoplasma pneumoniae.</title>
        <authorList>
            <person name="Krishnakumar R."/>
            <person name="Assad-Garcia N."/>
            <person name="Benders G.A."/>
            <person name="Phan Q."/>
            <person name="Montague M.G."/>
            <person name="Glass J.I."/>
        </authorList>
    </citation>
    <scope>DISRUPTION PHENOTYPE</scope>
    <source>
        <strain>ATCC 15531 / FH / type 2</strain>
    </source>
</reference>
<reference key="4">
    <citation type="journal article" date="2013" name="PLoS Genet.">
        <title>Comprehensive methylome characterization of Mycoplasma genitalium and Mycoplasma pneumoniae at single-base resolution.</title>
        <authorList>
            <person name="Lluch-Senar M."/>
            <person name="Luong K."/>
            <person name="Llorens-Rico V."/>
            <person name="Delgado J."/>
            <person name="Fang G."/>
            <person name="Spittle K."/>
            <person name="Clark T.A."/>
            <person name="Schadt E."/>
            <person name="Turner S.W."/>
            <person name="Korlach J."/>
            <person name="Serrano L."/>
        </authorList>
    </citation>
    <scope>DISCUSSION OF SEQUENCE</scope>
    <source>
        <strain>ATCC 29342 / M129 / Subtype 1</strain>
    </source>
</reference>
<proteinExistence type="uncertain"/>